<feature type="chain" id="PRO_1000062361" description="NADPH-dependent 7-cyano-7-deazaguanine reductase">
    <location>
        <begin position="1"/>
        <end position="284"/>
    </location>
</feature>
<feature type="active site" description="Thioimide intermediate" evidence="1">
    <location>
        <position position="192"/>
    </location>
</feature>
<feature type="active site" description="Proton donor" evidence="1">
    <location>
        <position position="199"/>
    </location>
</feature>
<feature type="binding site" evidence="1">
    <location>
        <begin position="91"/>
        <end position="93"/>
    </location>
    <ligand>
        <name>substrate</name>
    </ligand>
</feature>
<feature type="binding site" evidence="1">
    <location>
        <begin position="93"/>
        <end position="94"/>
    </location>
    <ligand>
        <name>NADPH</name>
        <dbReference type="ChEBI" id="CHEBI:57783"/>
    </ligand>
</feature>
<feature type="binding site" evidence="1">
    <location>
        <begin position="231"/>
        <end position="232"/>
    </location>
    <ligand>
        <name>substrate</name>
    </ligand>
</feature>
<feature type="binding site" evidence="1">
    <location>
        <begin position="260"/>
        <end position="261"/>
    </location>
    <ligand>
        <name>NADPH</name>
        <dbReference type="ChEBI" id="CHEBI:57783"/>
    </ligand>
</feature>
<accession>Q12P28</accession>
<evidence type="ECO:0000255" key="1">
    <source>
        <dbReference type="HAMAP-Rule" id="MF_00817"/>
    </source>
</evidence>
<reference key="1">
    <citation type="submission" date="2006-03" db="EMBL/GenBank/DDBJ databases">
        <title>Complete sequence of Shewanella denitrificans OS217.</title>
        <authorList>
            <consortium name="US DOE Joint Genome Institute"/>
            <person name="Copeland A."/>
            <person name="Lucas S."/>
            <person name="Lapidus A."/>
            <person name="Barry K."/>
            <person name="Detter J.C."/>
            <person name="Glavina del Rio T."/>
            <person name="Hammon N."/>
            <person name="Israni S."/>
            <person name="Dalin E."/>
            <person name="Tice H."/>
            <person name="Pitluck S."/>
            <person name="Brettin T."/>
            <person name="Bruce D."/>
            <person name="Han C."/>
            <person name="Tapia R."/>
            <person name="Gilna P."/>
            <person name="Kiss H."/>
            <person name="Schmutz J."/>
            <person name="Larimer F."/>
            <person name="Land M."/>
            <person name="Hauser L."/>
            <person name="Kyrpides N."/>
            <person name="Lykidis A."/>
            <person name="Richardson P."/>
        </authorList>
    </citation>
    <scope>NUCLEOTIDE SEQUENCE [LARGE SCALE GENOMIC DNA]</scope>
    <source>
        <strain>OS217 / ATCC BAA-1090 / DSM 15013</strain>
    </source>
</reference>
<protein>
    <recommendedName>
        <fullName evidence="1">NADPH-dependent 7-cyano-7-deazaguanine reductase</fullName>
        <ecNumber evidence="1">1.7.1.13</ecNumber>
    </recommendedName>
    <alternativeName>
        <fullName evidence="1">7-cyano-7-carbaguanine reductase</fullName>
    </alternativeName>
    <alternativeName>
        <fullName evidence="1">NADPH-dependent nitrile oxidoreductase</fullName>
    </alternativeName>
    <alternativeName>
        <fullName evidence="1">PreQ(0) reductase</fullName>
    </alternativeName>
</protein>
<gene>
    <name evidence="1" type="primary">queF</name>
    <name type="ordered locus">Sden_1513</name>
</gene>
<sequence length="284" mass="32754">MTHNHDPYSDAQALKGLTLGQATQYQAEYDPSLLQGVPRKLNRDAIELTTELPFHGTDIWTGYELSWLNGKGKPVVAILQVHLDIHSVNLIESKSFKLYLNSLNQTRFNNLDAVKDTLTTDLSQCAQGEVTVKIIEPKHFTIERISELPGNCIDDLDIEIFDYQFNPEYLLDSTEEKNVAETLTSNLLKSNCLITSQPDWGSVMIRYQGPKIDREKLLRYLISFRQHNEFHEQCVERIFMDLKQYCHCAKLTVYARYTRRGGLDINPFRSDFEQAPDSHRLARQ</sequence>
<keyword id="KW-0963">Cytoplasm</keyword>
<keyword id="KW-0521">NADP</keyword>
<keyword id="KW-0560">Oxidoreductase</keyword>
<keyword id="KW-0671">Queuosine biosynthesis</keyword>
<keyword id="KW-1185">Reference proteome</keyword>
<comment type="function">
    <text evidence="1">Catalyzes the NADPH-dependent reduction of 7-cyano-7-deazaguanine (preQ0) to 7-aminomethyl-7-deazaguanine (preQ1).</text>
</comment>
<comment type="catalytic activity">
    <reaction evidence="1">
        <text>7-aminomethyl-7-carbaguanine + 2 NADP(+) = 7-cyano-7-deazaguanine + 2 NADPH + 3 H(+)</text>
        <dbReference type="Rhea" id="RHEA:13409"/>
        <dbReference type="ChEBI" id="CHEBI:15378"/>
        <dbReference type="ChEBI" id="CHEBI:45075"/>
        <dbReference type="ChEBI" id="CHEBI:57783"/>
        <dbReference type="ChEBI" id="CHEBI:58349"/>
        <dbReference type="ChEBI" id="CHEBI:58703"/>
        <dbReference type="EC" id="1.7.1.13"/>
    </reaction>
</comment>
<comment type="pathway">
    <text evidence="1">tRNA modification; tRNA-queuosine biosynthesis.</text>
</comment>
<comment type="subunit">
    <text evidence="1">Homodimer.</text>
</comment>
<comment type="subcellular location">
    <subcellularLocation>
        <location evidence="1">Cytoplasm</location>
    </subcellularLocation>
</comment>
<comment type="similarity">
    <text evidence="1">Belongs to the GTP cyclohydrolase I family. QueF type 2 subfamily.</text>
</comment>
<dbReference type="EC" id="1.7.1.13" evidence="1"/>
<dbReference type="EMBL" id="CP000302">
    <property type="protein sequence ID" value="ABE54798.1"/>
    <property type="molecule type" value="Genomic_DNA"/>
</dbReference>
<dbReference type="RefSeq" id="WP_011495956.1">
    <property type="nucleotide sequence ID" value="NC_007954.1"/>
</dbReference>
<dbReference type="SMR" id="Q12P28"/>
<dbReference type="STRING" id="318161.Sden_1513"/>
<dbReference type="KEGG" id="sdn:Sden_1513"/>
<dbReference type="eggNOG" id="COG0780">
    <property type="taxonomic scope" value="Bacteria"/>
</dbReference>
<dbReference type="eggNOG" id="COG2904">
    <property type="taxonomic scope" value="Bacteria"/>
</dbReference>
<dbReference type="HOGENOM" id="CLU_054738_0_0_6"/>
<dbReference type="OrthoDB" id="9789995at2"/>
<dbReference type="UniPathway" id="UPA00392"/>
<dbReference type="Proteomes" id="UP000001982">
    <property type="component" value="Chromosome"/>
</dbReference>
<dbReference type="GO" id="GO:0005737">
    <property type="term" value="C:cytoplasm"/>
    <property type="evidence" value="ECO:0007669"/>
    <property type="project" value="UniProtKB-SubCell"/>
</dbReference>
<dbReference type="GO" id="GO:0033739">
    <property type="term" value="F:preQ1 synthase activity"/>
    <property type="evidence" value="ECO:0007669"/>
    <property type="project" value="UniProtKB-UniRule"/>
</dbReference>
<dbReference type="GO" id="GO:0008616">
    <property type="term" value="P:queuosine biosynthetic process"/>
    <property type="evidence" value="ECO:0007669"/>
    <property type="project" value="UniProtKB-UniRule"/>
</dbReference>
<dbReference type="GO" id="GO:0006400">
    <property type="term" value="P:tRNA modification"/>
    <property type="evidence" value="ECO:0007669"/>
    <property type="project" value="UniProtKB-UniRule"/>
</dbReference>
<dbReference type="Gene3D" id="3.30.1130.10">
    <property type="match status" value="2"/>
</dbReference>
<dbReference type="HAMAP" id="MF_00817">
    <property type="entry name" value="QueF_type2"/>
    <property type="match status" value="1"/>
</dbReference>
<dbReference type="InterPro" id="IPR043133">
    <property type="entry name" value="GTP-CH-I_C/QueF"/>
</dbReference>
<dbReference type="InterPro" id="IPR050084">
    <property type="entry name" value="NADPH_dep_7-cyano-7-deazaG_red"/>
</dbReference>
<dbReference type="InterPro" id="IPR029500">
    <property type="entry name" value="QueF"/>
</dbReference>
<dbReference type="InterPro" id="IPR029139">
    <property type="entry name" value="QueF_N"/>
</dbReference>
<dbReference type="InterPro" id="IPR016428">
    <property type="entry name" value="QueF_type2"/>
</dbReference>
<dbReference type="NCBIfam" id="TIGR03138">
    <property type="entry name" value="QueF"/>
    <property type="match status" value="1"/>
</dbReference>
<dbReference type="PANTHER" id="PTHR34354">
    <property type="entry name" value="NADPH-DEPENDENT 7-CYANO-7-DEAZAGUANINE REDUCTASE"/>
    <property type="match status" value="1"/>
</dbReference>
<dbReference type="PANTHER" id="PTHR34354:SF1">
    <property type="entry name" value="NADPH-DEPENDENT 7-CYANO-7-DEAZAGUANINE REDUCTASE"/>
    <property type="match status" value="1"/>
</dbReference>
<dbReference type="Pfam" id="PF14489">
    <property type="entry name" value="QueF"/>
    <property type="match status" value="1"/>
</dbReference>
<dbReference type="Pfam" id="PF14819">
    <property type="entry name" value="QueF_N"/>
    <property type="match status" value="1"/>
</dbReference>
<dbReference type="PIRSF" id="PIRSF004750">
    <property type="entry name" value="Nitrile_oxidored_YqcD_prd"/>
    <property type="match status" value="1"/>
</dbReference>
<dbReference type="SUPFAM" id="SSF55620">
    <property type="entry name" value="Tetrahydrobiopterin biosynthesis enzymes-like"/>
    <property type="match status" value="1"/>
</dbReference>
<organism>
    <name type="scientific">Shewanella denitrificans (strain OS217 / ATCC BAA-1090 / DSM 15013)</name>
    <dbReference type="NCBI Taxonomy" id="318161"/>
    <lineage>
        <taxon>Bacteria</taxon>
        <taxon>Pseudomonadati</taxon>
        <taxon>Pseudomonadota</taxon>
        <taxon>Gammaproteobacteria</taxon>
        <taxon>Alteromonadales</taxon>
        <taxon>Shewanellaceae</taxon>
        <taxon>Shewanella</taxon>
    </lineage>
</organism>
<name>QUEF_SHEDO</name>
<proteinExistence type="inferred from homology"/>